<protein>
    <recommendedName>
        <fullName evidence="1">Large ribosomal subunit protein bL28</fullName>
    </recommendedName>
    <alternativeName>
        <fullName evidence="3">50S ribosomal protein L28</fullName>
    </alternativeName>
</protein>
<proteinExistence type="inferred from homology"/>
<comment type="similarity">
    <text evidence="1">Belongs to the bacterial ribosomal protein bL28 family.</text>
</comment>
<feature type="chain" id="PRO_1000007189" description="Large ribosomal subunit protein bL28">
    <location>
        <begin position="1"/>
        <end position="77"/>
    </location>
</feature>
<feature type="region of interest" description="Disordered" evidence="2">
    <location>
        <begin position="1"/>
        <end position="25"/>
    </location>
</feature>
<sequence>MARVCQVTGKAPMSGNNVSHANNKTKRRFLPNLQNRRFWVESENRWVRLRVSNAGLRLIDKNGIDSVLADLRARGEA</sequence>
<accession>A2S4Y9</accession>
<gene>
    <name evidence="1" type="primary">rpmB</name>
    <name type="ordered locus">BMA10229_A1021</name>
</gene>
<dbReference type="EMBL" id="CP000546">
    <property type="protein sequence ID" value="ABN01471.1"/>
    <property type="molecule type" value="Genomic_DNA"/>
</dbReference>
<dbReference type="RefSeq" id="WP_004186391.1">
    <property type="nucleotide sequence ID" value="NC_008836.1"/>
</dbReference>
<dbReference type="SMR" id="A2S4Y9"/>
<dbReference type="GeneID" id="98107656"/>
<dbReference type="KEGG" id="bml:BMA10229_A1021"/>
<dbReference type="HOGENOM" id="CLU_064548_3_1_4"/>
<dbReference type="Proteomes" id="UP000002283">
    <property type="component" value="Chromosome I"/>
</dbReference>
<dbReference type="GO" id="GO:0022625">
    <property type="term" value="C:cytosolic large ribosomal subunit"/>
    <property type="evidence" value="ECO:0007669"/>
    <property type="project" value="TreeGrafter"/>
</dbReference>
<dbReference type="GO" id="GO:0003735">
    <property type="term" value="F:structural constituent of ribosome"/>
    <property type="evidence" value="ECO:0007669"/>
    <property type="project" value="InterPro"/>
</dbReference>
<dbReference type="GO" id="GO:0006412">
    <property type="term" value="P:translation"/>
    <property type="evidence" value="ECO:0007669"/>
    <property type="project" value="UniProtKB-UniRule"/>
</dbReference>
<dbReference type="FunFam" id="2.30.170.40:FF:000001">
    <property type="entry name" value="50S ribosomal protein L28"/>
    <property type="match status" value="1"/>
</dbReference>
<dbReference type="Gene3D" id="2.30.170.40">
    <property type="entry name" value="Ribosomal protein L28/L24"/>
    <property type="match status" value="1"/>
</dbReference>
<dbReference type="HAMAP" id="MF_00373">
    <property type="entry name" value="Ribosomal_bL28"/>
    <property type="match status" value="1"/>
</dbReference>
<dbReference type="InterPro" id="IPR026569">
    <property type="entry name" value="Ribosomal_bL28"/>
</dbReference>
<dbReference type="InterPro" id="IPR034704">
    <property type="entry name" value="Ribosomal_bL28/bL31-like_sf"/>
</dbReference>
<dbReference type="InterPro" id="IPR001383">
    <property type="entry name" value="Ribosomal_bL28_bact-type"/>
</dbReference>
<dbReference type="InterPro" id="IPR037147">
    <property type="entry name" value="Ribosomal_bL28_sf"/>
</dbReference>
<dbReference type="NCBIfam" id="TIGR00009">
    <property type="entry name" value="L28"/>
    <property type="match status" value="1"/>
</dbReference>
<dbReference type="PANTHER" id="PTHR13528">
    <property type="entry name" value="39S RIBOSOMAL PROTEIN L28, MITOCHONDRIAL"/>
    <property type="match status" value="1"/>
</dbReference>
<dbReference type="PANTHER" id="PTHR13528:SF2">
    <property type="entry name" value="LARGE RIBOSOMAL SUBUNIT PROTEIN BL28M"/>
    <property type="match status" value="1"/>
</dbReference>
<dbReference type="Pfam" id="PF00830">
    <property type="entry name" value="Ribosomal_L28"/>
    <property type="match status" value="1"/>
</dbReference>
<dbReference type="SUPFAM" id="SSF143800">
    <property type="entry name" value="L28p-like"/>
    <property type="match status" value="1"/>
</dbReference>
<keyword id="KW-0687">Ribonucleoprotein</keyword>
<keyword id="KW-0689">Ribosomal protein</keyword>
<reference key="1">
    <citation type="journal article" date="2010" name="Genome Biol. Evol.">
        <title>Continuing evolution of Burkholderia mallei through genome reduction and large-scale rearrangements.</title>
        <authorList>
            <person name="Losada L."/>
            <person name="Ronning C.M."/>
            <person name="DeShazer D."/>
            <person name="Woods D."/>
            <person name="Fedorova N."/>
            <person name="Kim H.S."/>
            <person name="Shabalina S.A."/>
            <person name="Pearson T.R."/>
            <person name="Brinkac L."/>
            <person name="Tan P."/>
            <person name="Nandi T."/>
            <person name="Crabtree J."/>
            <person name="Badger J."/>
            <person name="Beckstrom-Sternberg S."/>
            <person name="Saqib M."/>
            <person name="Schutzer S.E."/>
            <person name="Keim P."/>
            <person name="Nierman W.C."/>
        </authorList>
    </citation>
    <scope>NUCLEOTIDE SEQUENCE [LARGE SCALE GENOMIC DNA]</scope>
    <source>
        <strain>NCTC 10229</strain>
    </source>
</reference>
<name>RL28_BURM9</name>
<organism>
    <name type="scientific">Burkholderia mallei (strain NCTC 10229)</name>
    <dbReference type="NCBI Taxonomy" id="412022"/>
    <lineage>
        <taxon>Bacteria</taxon>
        <taxon>Pseudomonadati</taxon>
        <taxon>Pseudomonadota</taxon>
        <taxon>Betaproteobacteria</taxon>
        <taxon>Burkholderiales</taxon>
        <taxon>Burkholderiaceae</taxon>
        <taxon>Burkholderia</taxon>
        <taxon>pseudomallei group</taxon>
    </lineage>
</organism>
<evidence type="ECO:0000255" key="1">
    <source>
        <dbReference type="HAMAP-Rule" id="MF_00373"/>
    </source>
</evidence>
<evidence type="ECO:0000256" key="2">
    <source>
        <dbReference type="SAM" id="MobiDB-lite"/>
    </source>
</evidence>
<evidence type="ECO:0000305" key="3"/>